<keyword id="KW-0067">ATP-binding</keyword>
<keyword id="KW-0997">Cell inner membrane</keyword>
<keyword id="KW-1003">Cell membrane</keyword>
<keyword id="KW-0472">Membrane</keyword>
<keyword id="KW-0547">Nucleotide-binding</keyword>
<keyword id="KW-1278">Translocase</keyword>
<keyword id="KW-0813">Transport</keyword>
<gene>
    <name evidence="1" type="primary">hmuV</name>
    <name type="ordered locus">RPD_2348</name>
</gene>
<feature type="chain" id="PRO_0000277706" description="Hemin import ATP-binding protein HmuV">
    <location>
        <begin position="1"/>
        <end position="261"/>
    </location>
</feature>
<feature type="domain" description="ABC transporter" evidence="1">
    <location>
        <begin position="5"/>
        <end position="241"/>
    </location>
</feature>
<feature type="binding site" evidence="1">
    <location>
        <begin position="37"/>
        <end position="44"/>
    </location>
    <ligand>
        <name>ATP</name>
        <dbReference type="ChEBI" id="CHEBI:30616"/>
    </ligand>
</feature>
<protein>
    <recommendedName>
        <fullName evidence="1">Hemin import ATP-binding protein HmuV</fullName>
        <ecNumber evidence="1">7.6.2.-</ecNumber>
    </recommendedName>
</protein>
<sequence>MSAALTANAASFAIGSVALVERVDLRVEPGELIAIVGPNGAGKSTLLRMLSGDVRPTAGAVRMANRDLSTYSPRELAGRRAVLAQHTNVGFPFSVEEIVWMGADIDRRKAAPLFDRAIREVRLEAFRHRDVTTLSGGEQQRTHFARVLLQLWCGEASYGPGLLLLDEPTSSLDIRHQLDLAEMARRCARDGTTVIAILHDLNLAARFADRILMMHQGALTADGTPSAVIRPDLLARVFDVDLSVSRDSTGAPFVLPQLAKR</sequence>
<name>HMUV_RHOPS</name>
<dbReference type="EC" id="7.6.2.-" evidence="1"/>
<dbReference type="EMBL" id="CP000283">
    <property type="protein sequence ID" value="ABE39580.1"/>
    <property type="molecule type" value="Genomic_DNA"/>
</dbReference>
<dbReference type="SMR" id="Q138A9"/>
<dbReference type="STRING" id="316057.RPD_2348"/>
<dbReference type="KEGG" id="rpd:RPD_2348"/>
<dbReference type="eggNOG" id="COG4559">
    <property type="taxonomic scope" value="Bacteria"/>
</dbReference>
<dbReference type="HOGENOM" id="CLU_000604_1_11_5"/>
<dbReference type="BioCyc" id="RPAL316057:RPD_RS11780-MONOMER"/>
<dbReference type="Proteomes" id="UP000001818">
    <property type="component" value="Chromosome"/>
</dbReference>
<dbReference type="GO" id="GO:0005886">
    <property type="term" value="C:plasma membrane"/>
    <property type="evidence" value="ECO:0007669"/>
    <property type="project" value="UniProtKB-SubCell"/>
</dbReference>
<dbReference type="GO" id="GO:0005524">
    <property type="term" value="F:ATP binding"/>
    <property type="evidence" value="ECO:0007669"/>
    <property type="project" value="UniProtKB-KW"/>
</dbReference>
<dbReference type="GO" id="GO:0016887">
    <property type="term" value="F:ATP hydrolysis activity"/>
    <property type="evidence" value="ECO:0007669"/>
    <property type="project" value="InterPro"/>
</dbReference>
<dbReference type="CDD" id="cd03214">
    <property type="entry name" value="ABC_Iron-Siderophores_B12_Hemin"/>
    <property type="match status" value="1"/>
</dbReference>
<dbReference type="Gene3D" id="3.40.50.300">
    <property type="entry name" value="P-loop containing nucleotide triphosphate hydrolases"/>
    <property type="match status" value="1"/>
</dbReference>
<dbReference type="InterPro" id="IPR003593">
    <property type="entry name" value="AAA+_ATPase"/>
</dbReference>
<dbReference type="InterPro" id="IPR003439">
    <property type="entry name" value="ABC_transporter-like_ATP-bd"/>
</dbReference>
<dbReference type="InterPro" id="IPR027417">
    <property type="entry name" value="P-loop_NTPase"/>
</dbReference>
<dbReference type="NCBIfam" id="NF010068">
    <property type="entry name" value="PRK13548.1"/>
    <property type="match status" value="1"/>
</dbReference>
<dbReference type="PANTHER" id="PTHR42794">
    <property type="entry name" value="HEMIN IMPORT ATP-BINDING PROTEIN HMUV"/>
    <property type="match status" value="1"/>
</dbReference>
<dbReference type="PANTHER" id="PTHR42794:SF1">
    <property type="entry name" value="HEMIN IMPORT ATP-BINDING PROTEIN HMUV"/>
    <property type="match status" value="1"/>
</dbReference>
<dbReference type="Pfam" id="PF00005">
    <property type="entry name" value="ABC_tran"/>
    <property type="match status" value="1"/>
</dbReference>
<dbReference type="SMART" id="SM00382">
    <property type="entry name" value="AAA"/>
    <property type="match status" value="1"/>
</dbReference>
<dbReference type="SUPFAM" id="SSF52540">
    <property type="entry name" value="P-loop containing nucleoside triphosphate hydrolases"/>
    <property type="match status" value="1"/>
</dbReference>
<dbReference type="PROSITE" id="PS50893">
    <property type="entry name" value="ABC_TRANSPORTER_2"/>
    <property type="match status" value="1"/>
</dbReference>
<dbReference type="PROSITE" id="PS51261">
    <property type="entry name" value="HMUV"/>
    <property type="match status" value="1"/>
</dbReference>
<evidence type="ECO:0000255" key="1">
    <source>
        <dbReference type="HAMAP-Rule" id="MF_01718"/>
    </source>
</evidence>
<organism>
    <name type="scientific">Rhodopseudomonas palustris (strain BisB5)</name>
    <dbReference type="NCBI Taxonomy" id="316057"/>
    <lineage>
        <taxon>Bacteria</taxon>
        <taxon>Pseudomonadati</taxon>
        <taxon>Pseudomonadota</taxon>
        <taxon>Alphaproteobacteria</taxon>
        <taxon>Hyphomicrobiales</taxon>
        <taxon>Nitrobacteraceae</taxon>
        <taxon>Rhodopseudomonas</taxon>
    </lineage>
</organism>
<comment type="function">
    <text evidence="1">Part of the ABC transporter complex HmuTUV involved in hemin import. Responsible for energy coupling to the transport system.</text>
</comment>
<comment type="subunit">
    <text evidence="1">The complex is composed of two ATP-binding proteins (HmuV), two transmembrane proteins (HmuU) and a solute-binding protein (HmuT).</text>
</comment>
<comment type="subcellular location">
    <subcellularLocation>
        <location evidence="1">Cell inner membrane</location>
        <topology evidence="1">Peripheral membrane protein</topology>
    </subcellularLocation>
</comment>
<comment type="similarity">
    <text evidence="1">Belongs to the ABC transporter superfamily. Heme (hemin) importer (TC 3.A.1.14.5) family.</text>
</comment>
<reference key="1">
    <citation type="submission" date="2006-03" db="EMBL/GenBank/DDBJ databases">
        <title>Complete sequence of Rhodopseudomonas palustris BisB5.</title>
        <authorList>
            <consortium name="US DOE Joint Genome Institute"/>
            <person name="Copeland A."/>
            <person name="Lucas S."/>
            <person name="Lapidus A."/>
            <person name="Barry K."/>
            <person name="Detter J.C."/>
            <person name="Glavina del Rio T."/>
            <person name="Hammon N."/>
            <person name="Israni S."/>
            <person name="Dalin E."/>
            <person name="Tice H."/>
            <person name="Pitluck S."/>
            <person name="Chain P."/>
            <person name="Malfatti S."/>
            <person name="Shin M."/>
            <person name="Vergez L."/>
            <person name="Schmutz J."/>
            <person name="Larimer F."/>
            <person name="Land M."/>
            <person name="Hauser L."/>
            <person name="Pelletier D.A."/>
            <person name="Kyrpides N."/>
            <person name="Lykidis A."/>
            <person name="Oda Y."/>
            <person name="Harwood C.S."/>
            <person name="Richardson P."/>
        </authorList>
    </citation>
    <scope>NUCLEOTIDE SEQUENCE [LARGE SCALE GENOMIC DNA]</scope>
    <source>
        <strain>BisB5</strain>
    </source>
</reference>
<proteinExistence type="inferred from homology"/>
<accession>Q138A9</accession>